<evidence type="ECO:0000305" key="1"/>
<reference key="1">
    <citation type="journal article" date="2005" name="Genome Biol.">
        <title>Full-length cDNAs from chicken bursal lymphocytes to facilitate gene function analysis.</title>
        <authorList>
            <person name="Caldwell R.B."/>
            <person name="Kierzek A.M."/>
            <person name="Arakawa H."/>
            <person name="Bezzubov Y."/>
            <person name="Zaim J."/>
            <person name="Fiedler P."/>
            <person name="Kutter S."/>
            <person name="Blagodatski A."/>
            <person name="Kostovska D."/>
            <person name="Koter M."/>
            <person name="Plachy J."/>
            <person name="Carninci P."/>
            <person name="Hayashizaki Y."/>
            <person name="Buerstedde J.-M."/>
        </authorList>
    </citation>
    <scope>NUCLEOTIDE SEQUENCE [LARGE SCALE MRNA]</scope>
    <source>
        <strain>CB</strain>
        <tissue>Bursa of Fabricius</tissue>
    </source>
</reference>
<keyword id="KW-1185">Reference proteome</keyword>
<keyword id="KW-0677">Repeat</keyword>
<keyword id="KW-0802">TPR repeat</keyword>
<comment type="similarity">
    <text evidence="1">Belongs to the TTC27 family.</text>
</comment>
<organism>
    <name type="scientific">Gallus gallus</name>
    <name type="common">Chicken</name>
    <dbReference type="NCBI Taxonomy" id="9031"/>
    <lineage>
        <taxon>Eukaryota</taxon>
        <taxon>Metazoa</taxon>
        <taxon>Chordata</taxon>
        <taxon>Craniata</taxon>
        <taxon>Vertebrata</taxon>
        <taxon>Euteleostomi</taxon>
        <taxon>Archelosauria</taxon>
        <taxon>Archosauria</taxon>
        <taxon>Dinosauria</taxon>
        <taxon>Saurischia</taxon>
        <taxon>Theropoda</taxon>
        <taxon>Coelurosauria</taxon>
        <taxon>Aves</taxon>
        <taxon>Neognathae</taxon>
        <taxon>Galloanserae</taxon>
        <taxon>Galliformes</taxon>
        <taxon>Phasianidae</taxon>
        <taxon>Phasianinae</taxon>
        <taxon>Gallus</taxon>
    </lineage>
</organism>
<sequence>MLALERSLLRGFLSAAESQEWKQGEISATESGSVLQLIFDGKYEAIFSNSTIRNVFSASSVAEEDIESYLEKQILMYLDCSTEVDNMERQRLMFLLGVGSLQLFVQSNWTGPPVHLQLQGFLPSALLQKCLEPKMLHATILKMLVLDAESVYTLTSHPILLLIARVVLVNSRHKLSSLQTLPWWTLRCVNIHQQLLEERSPELFTLAQMCIRQMTEAEALFAGDEGWHLAVQFNLECAYTFLYYYEYKKAKQCFCTAKDIAKLQINLTGALGKRTRFQEKYVAQLILDVQRSEEFIPPHSELTPAPTPLENLTMNCDLNDDTVLNEIKLADADQYQVPDLCAEELAVILGICIDFQKNNPIHKLTEEELLAFTSCLLSQPKFWAIQTSALLLRTKLEKGSTRRMERAMKQTQALADQFEDVNTSVSERMKIFYCCQVPPHWAIQRQLASLLFELGCTSSALQIYEELEMWEDAVICYERAGQHGKAEEILRRELEKKETPVLYCLLGDVLKDHQCYDKAWELSRHRSARAQRSKGLLHLRNREFRECVECFERSVQINPMQLGVWFSLGCAYIALEGYEGAAKAFQRCVTLEPDNAEAWNNLSTAYIRLKQKIKAFRTLQEALKCNYEHWQIWENYLLTSTDVGEFSEAIKAYHRLMDLREKYKDTQVLAILVRAVVDGMADRTGEAASGLKGKLRELLGRVTSRVTNDGEIWRLYARLYGNGHSDSSEDIEKSLQCLTKAHKCEIQSNDWEKDVSSFKEVAKGAIEIAHVAIKCSKKKSNNQEALQILSSARLNLRGLSSKAKQRFVDVGSHEICNEVTDEVTTMDNLIAELQELSNQLRDQG</sequence>
<protein>
    <recommendedName>
        <fullName>Tetratricopeptide repeat protein 27</fullName>
        <shortName>TPR repeat protein 27</shortName>
    </recommendedName>
</protein>
<dbReference type="EMBL" id="AJ851650">
    <property type="protein sequence ID" value="CAH65284.1"/>
    <property type="molecule type" value="mRNA"/>
</dbReference>
<dbReference type="RefSeq" id="NP_001012585.1">
    <property type="nucleotide sequence ID" value="NM_001012567.1"/>
</dbReference>
<dbReference type="SMR" id="Q5F3K0"/>
<dbReference type="FunCoup" id="Q5F3K0">
    <property type="interactions" value="2507"/>
</dbReference>
<dbReference type="STRING" id="9031.ENSGALP00000017134"/>
<dbReference type="GlyGen" id="Q5F3K0">
    <property type="glycosylation" value="1 site"/>
</dbReference>
<dbReference type="PaxDb" id="9031-ENSGALP00000017134"/>
<dbReference type="GeneID" id="421462"/>
<dbReference type="KEGG" id="gga:421462"/>
<dbReference type="CTD" id="55622"/>
<dbReference type="VEuPathDB" id="HostDB:geneid_421462"/>
<dbReference type="eggNOG" id="KOG1128">
    <property type="taxonomic scope" value="Eukaryota"/>
</dbReference>
<dbReference type="InParanoid" id="Q5F3K0"/>
<dbReference type="OrthoDB" id="1936594at2759"/>
<dbReference type="PhylomeDB" id="Q5F3K0"/>
<dbReference type="PRO" id="PR:Q5F3K0"/>
<dbReference type="Proteomes" id="UP000000539">
    <property type="component" value="Unassembled WGS sequence"/>
</dbReference>
<dbReference type="Gene3D" id="1.25.40.10">
    <property type="entry name" value="Tetratricopeptide repeat domain"/>
    <property type="match status" value="1"/>
</dbReference>
<dbReference type="InterPro" id="IPR011990">
    <property type="entry name" value="TPR-like_helical_dom_sf"/>
</dbReference>
<dbReference type="InterPro" id="IPR019734">
    <property type="entry name" value="TPR_rpt"/>
</dbReference>
<dbReference type="InterPro" id="IPR044244">
    <property type="entry name" value="TTC27/Emw1"/>
</dbReference>
<dbReference type="PANTHER" id="PTHR16193">
    <property type="entry name" value="TETRATRICOPEPTIDE REPEAT PROTEIN 27"/>
    <property type="match status" value="1"/>
</dbReference>
<dbReference type="PANTHER" id="PTHR16193:SF0">
    <property type="entry name" value="TETRATRICOPEPTIDE REPEAT PROTEIN 27"/>
    <property type="match status" value="1"/>
</dbReference>
<dbReference type="Pfam" id="PF13432">
    <property type="entry name" value="TPR_16"/>
    <property type="match status" value="1"/>
</dbReference>
<dbReference type="SMART" id="SM00028">
    <property type="entry name" value="TPR"/>
    <property type="match status" value="4"/>
</dbReference>
<dbReference type="SUPFAM" id="SSF48452">
    <property type="entry name" value="TPR-like"/>
    <property type="match status" value="1"/>
</dbReference>
<dbReference type="PROSITE" id="PS50005">
    <property type="entry name" value="TPR"/>
    <property type="match status" value="4"/>
</dbReference>
<dbReference type="PROSITE" id="PS50293">
    <property type="entry name" value="TPR_REGION"/>
    <property type="match status" value="1"/>
</dbReference>
<gene>
    <name type="primary">TTC27</name>
    <name type="ORF">RCJMB04_15c1</name>
</gene>
<feature type="chain" id="PRO_0000295099" description="Tetratricopeptide repeat protein 27">
    <location>
        <begin position="1"/>
        <end position="844"/>
    </location>
</feature>
<feature type="repeat" description="TPR 1">
    <location>
        <begin position="454"/>
        <end position="487"/>
    </location>
</feature>
<feature type="repeat" description="TPR 2">
    <location>
        <begin position="493"/>
        <end position="526"/>
    </location>
</feature>
<feature type="repeat" description="TPR 3">
    <location>
        <begin position="528"/>
        <end position="561"/>
    </location>
</feature>
<feature type="repeat" description="TPR 4">
    <location>
        <begin position="562"/>
        <end position="595"/>
    </location>
</feature>
<feature type="repeat" description="TPR 5">
    <location>
        <begin position="597"/>
        <end position="629"/>
    </location>
</feature>
<feature type="repeat" description="TPR 6">
    <location>
        <begin position="630"/>
        <end position="663"/>
    </location>
</feature>
<name>TTC27_CHICK</name>
<accession>Q5F3K0</accession>
<proteinExistence type="evidence at transcript level"/>